<organism>
    <name type="scientific">Homo sapiens</name>
    <name type="common">Human</name>
    <dbReference type="NCBI Taxonomy" id="9606"/>
    <lineage>
        <taxon>Eukaryota</taxon>
        <taxon>Metazoa</taxon>
        <taxon>Chordata</taxon>
        <taxon>Craniata</taxon>
        <taxon>Vertebrata</taxon>
        <taxon>Euteleostomi</taxon>
        <taxon>Mammalia</taxon>
        <taxon>Eutheria</taxon>
        <taxon>Euarchontoglires</taxon>
        <taxon>Primates</taxon>
        <taxon>Haplorrhini</taxon>
        <taxon>Catarrhini</taxon>
        <taxon>Hominidae</taxon>
        <taxon>Homo</taxon>
    </lineage>
</organism>
<sequence length="407" mass="44379">MLFDKVKAFSVQLDGATAGVEPVFSGGQAVAGRVLLELSSAARVGALRLRARGRAHVHWTESRSAGSSTAYTQSYSERVEVVSHRATLLAPDTGETTTLPPGRHEFLFSFQLPPTLVTSFEGKHGSVRYCIKATLHRPWVPARRARKVFTVIEPVDINTPALLAPQAGAREKVARSWYCNRGLVSLSAKIDRKGYTPGEVIPVFAEIDNGSTRPVLPRAAVVQTQTFMARGARKQKRAVVASLAGEPVGPGQRALWQGRALRIPPVGPSILHCRVLHVDYALKVCVDIPGTSKLLLELPLVIGTIPLHPFGSRSSSVGSHASFLLDWRLGALPERPEAPPEYSEVVADTEEAALGQSPFPLPQDPDMSLEGPFFAYIQEFRYRPPPLYSEEDPNPLLGDMRPRCMTC</sequence>
<dbReference type="EMBL" id="AK127940">
    <property type="protein sequence ID" value="BAC87200.1"/>
    <property type="molecule type" value="mRNA"/>
</dbReference>
<dbReference type="EMBL" id="AK314657">
    <property type="protein sequence ID" value="BAG37216.1"/>
    <property type="molecule type" value="mRNA"/>
</dbReference>
<dbReference type="EMBL" id="AF193051">
    <property type="protein sequence ID" value="AAG22479.1"/>
    <property type="molecule type" value="mRNA"/>
</dbReference>
<dbReference type="EMBL" id="CH471106">
    <property type="protein sequence ID" value="EAW84650.1"/>
    <property type="molecule type" value="Genomic_DNA"/>
</dbReference>
<dbReference type="EMBL" id="BC022516">
    <property type="protein sequence ID" value="AAH22516.1"/>
    <property type="molecule type" value="mRNA"/>
</dbReference>
<dbReference type="EMBL" id="AF131826">
    <property type="protein sequence ID" value="AAD20053.1"/>
    <property type="molecule type" value="mRNA"/>
</dbReference>
<dbReference type="CCDS" id="CCDS12370.1">
    <molecule id="Q8TBH0-1"/>
</dbReference>
<dbReference type="CCDS" id="CCDS32956.1">
    <molecule id="Q8TBH0-2"/>
</dbReference>
<dbReference type="RefSeq" id="NP_001020775.1">
    <molecule id="Q8TBH0-2"/>
    <property type="nucleotide sequence ID" value="NM_001025604.3"/>
</dbReference>
<dbReference type="RefSeq" id="NP_001273755.1">
    <property type="nucleotide sequence ID" value="NM_001286826.1"/>
</dbReference>
<dbReference type="RefSeq" id="NP_056498.1">
    <molecule id="Q8TBH0-1"/>
    <property type="nucleotide sequence ID" value="NM_015683.2"/>
</dbReference>
<dbReference type="SMR" id="Q8TBH0"/>
<dbReference type="BioGRID" id="118004">
    <property type="interactions" value="53"/>
</dbReference>
<dbReference type="FunCoup" id="Q8TBH0">
    <property type="interactions" value="328"/>
</dbReference>
<dbReference type="IntAct" id="Q8TBH0">
    <property type="interactions" value="51"/>
</dbReference>
<dbReference type="STRING" id="9606.ENSP00000222250"/>
<dbReference type="iPTMnet" id="Q8TBH0"/>
<dbReference type="PhosphoSitePlus" id="Q8TBH0"/>
<dbReference type="BioMuta" id="ARRDC2"/>
<dbReference type="DMDM" id="109940307"/>
<dbReference type="jPOST" id="Q8TBH0"/>
<dbReference type="MassIVE" id="Q8TBH0"/>
<dbReference type="PaxDb" id="9606-ENSP00000222250"/>
<dbReference type="PeptideAtlas" id="Q8TBH0"/>
<dbReference type="ProteomicsDB" id="74017">
    <molecule id="Q8TBH0-1"/>
</dbReference>
<dbReference type="ProteomicsDB" id="74018">
    <molecule id="Q8TBH0-2"/>
</dbReference>
<dbReference type="Antibodypedia" id="58020">
    <property type="antibodies" value="95 antibodies from 22 providers"/>
</dbReference>
<dbReference type="DNASU" id="27106"/>
<dbReference type="Ensembl" id="ENST00000222250.5">
    <molecule id="Q8TBH0-1"/>
    <property type="protein sequence ID" value="ENSP00000222250.3"/>
    <property type="gene ID" value="ENSG00000105643.11"/>
</dbReference>
<dbReference type="Ensembl" id="ENST00000379656.7">
    <molecule id="Q8TBH0-2"/>
    <property type="protein sequence ID" value="ENSP00000368977.1"/>
    <property type="gene ID" value="ENSG00000105643.11"/>
</dbReference>
<dbReference type="GeneID" id="27106"/>
<dbReference type="KEGG" id="hsa:27106"/>
<dbReference type="MANE-Select" id="ENST00000222250.5">
    <property type="protein sequence ID" value="ENSP00000222250.3"/>
    <property type="RefSeq nucleotide sequence ID" value="NM_015683.2"/>
    <property type="RefSeq protein sequence ID" value="NP_056498.1"/>
</dbReference>
<dbReference type="UCSC" id="uc002nhu.4">
    <molecule id="Q8TBH0-1"/>
    <property type="organism name" value="human"/>
</dbReference>
<dbReference type="AGR" id="HGNC:25225"/>
<dbReference type="CTD" id="27106"/>
<dbReference type="DisGeNET" id="27106"/>
<dbReference type="GeneCards" id="ARRDC2"/>
<dbReference type="HGNC" id="HGNC:25225">
    <property type="gene designation" value="ARRDC2"/>
</dbReference>
<dbReference type="HPA" id="ENSG00000105643">
    <property type="expression patterns" value="Tissue enhanced (skeletal)"/>
</dbReference>
<dbReference type="neXtProt" id="NX_Q8TBH0"/>
<dbReference type="OpenTargets" id="ENSG00000105643"/>
<dbReference type="PharmGKB" id="PA134945141"/>
<dbReference type="VEuPathDB" id="HostDB:ENSG00000105643"/>
<dbReference type="eggNOG" id="KOG3780">
    <property type="taxonomic scope" value="Eukaryota"/>
</dbReference>
<dbReference type="GeneTree" id="ENSGT00940000159994"/>
<dbReference type="HOGENOM" id="CLU_039221_1_1_1"/>
<dbReference type="InParanoid" id="Q8TBH0"/>
<dbReference type="OMA" id="QSYSERM"/>
<dbReference type="OrthoDB" id="2333384at2759"/>
<dbReference type="PAN-GO" id="Q8TBH0">
    <property type="GO annotations" value="3 GO annotations based on evolutionary models"/>
</dbReference>
<dbReference type="PhylomeDB" id="Q8TBH0"/>
<dbReference type="TreeFam" id="TF313650"/>
<dbReference type="PathwayCommons" id="Q8TBH0"/>
<dbReference type="SignaLink" id="Q8TBH0"/>
<dbReference type="BioGRID-ORCS" id="27106">
    <property type="hits" value="22 hits in 1163 CRISPR screens"/>
</dbReference>
<dbReference type="ChiTaRS" id="ARRDC2">
    <property type="organism name" value="human"/>
</dbReference>
<dbReference type="GenomeRNAi" id="27106"/>
<dbReference type="Pharos" id="Q8TBH0">
    <property type="development level" value="Tbio"/>
</dbReference>
<dbReference type="PRO" id="PR:Q8TBH0"/>
<dbReference type="Proteomes" id="UP000005640">
    <property type="component" value="Chromosome 19"/>
</dbReference>
<dbReference type="RNAct" id="Q8TBH0">
    <property type="molecule type" value="protein"/>
</dbReference>
<dbReference type="Bgee" id="ENSG00000105643">
    <property type="expression patterns" value="Expressed in right lung and 173 other cell types or tissues"/>
</dbReference>
<dbReference type="ExpressionAtlas" id="Q8TBH0">
    <property type="expression patterns" value="baseline and differential"/>
</dbReference>
<dbReference type="GO" id="GO:0005737">
    <property type="term" value="C:cytoplasm"/>
    <property type="evidence" value="ECO:0000318"/>
    <property type="project" value="GO_Central"/>
</dbReference>
<dbReference type="GO" id="GO:0031410">
    <property type="term" value="C:cytoplasmic vesicle"/>
    <property type="evidence" value="ECO:0000314"/>
    <property type="project" value="MGI"/>
</dbReference>
<dbReference type="GO" id="GO:0005886">
    <property type="term" value="C:plasma membrane"/>
    <property type="evidence" value="ECO:0000314"/>
    <property type="project" value="MGI"/>
</dbReference>
<dbReference type="GO" id="GO:0015031">
    <property type="term" value="P:protein transport"/>
    <property type="evidence" value="ECO:0000318"/>
    <property type="project" value="GO_Central"/>
</dbReference>
<dbReference type="FunFam" id="2.60.40.640:FF:000014">
    <property type="entry name" value="arrestin domain-containing protein 2 isoform X1"/>
    <property type="match status" value="1"/>
</dbReference>
<dbReference type="FunFam" id="2.60.40.640:FF:000007">
    <property type="entry name" value="Arrestin domain-containing protein 3 mRNA"/>
    <property type="match status" value="1"/>
</dbReference>
<dbReference type="Gene3D" id="2.60.40.640">
    <property type="match status" value="2"/>
</dbReference>
<dbReference type="InterPro" id="IPR014752">
    <property type="entry name" value="Arrestin-like_C"/>
</dbReference>
<dbReference type="InterPro" id="IPR011021">
    <property type="entry name" value="Arrestin-like_N"/>
</dbReference>
<dbReference type="InterPro" id="IPR011022">
    <property type="entry name" value="Arrestin_C-like"/>
</dbReference>
<dbReference type="InterPro" id="IPR050357">
    <property type="entry name" value="Arrestin_domain-protein"/>
</dbReference>
<dbReference type="InterPro" id="IPR014756">
    <property type="entry name" value="Ig_E-set"/>
</dbReference>
<dbReference type="PANTHER" id="PTHR11188">
    <property type="entry name" value="ARRESTIN DOMAIN CONTAINING PROTEIN"/>
    <property type="match status" value="1"/>
</dbReference>
<dbReference type="PANTHER" id="PTHR11188:SF48">
    <property type="entry name" value="ARRESTIN DOMAIN-CONTAINING PROTEIN 2"/>
    <property type="match status" value="1"/>
</dbReference>
<dbReference type="Pfam" id="PF02752">
    <property type="entry name" value="Arrestin_C"/>
    <property type="match status" value="1"/>
</dbReference>
<dbReference type="Pfam" id="PF00339">
    <property type="entry name" value="Arrestin_N"/>
    <property type="match status" value="1"/>
</dbReference>
<dbReference type="SMART" id="SM01017">
    <property type="entry name" value="Arrestin_C"/>
    <property type="match status" value="1"/>
</dbReference>
<dbReference type="SUPFAM" id="SSF81296">
    <property type="entry name" value="E set domains"/>
    <property type="match status" value="2"/>
</dbReference>
<name>ARRD2_HUMAN</name>
<comment type="subunit">
    <text evidence="2">Interacts with WWP1 (via WW domains).</text>
</comment>
<comment type="interaction">
    <interactant intactId="EBI-12191751">
        <id>Q8TBH0</id>
    </interactant>
    <interactant intactId="EBI-12135243">
        <id>O95208-2</id>
        <label>EPN2</label>
    </interactant>
    <organismsDiffer>false</organismsDiffer>
    <experiments>3</experiments>
</comment>
<comment type="interaction">
    <interactant intactId="EBI-12191751">
        <id>Q8TBH0</id>
    </interactant>
    <interactant intactId="EBI-527853">
        <id>Q9UGI0</id>
        <label>ZRANB1</label>
    </interactant>
    <organismsDiffer>false</organismsDiffer>
    <experiments>3</experiments>
</comment>
<comment type="alternative products">
    <event type="alternative splicing"/>
    <isoform>
        <id>Q8TBH0-1</id>
        <name>1</name>
        <sequence type="displayed"/>
    </isoform>
    <isoform>
        <id>Q8TBH0-2</id>
        <name>2</name>
        <sequence type="described" ref="VSP_019544"/>
    </isoform>
</comment>
<comment type="similarity">
    <text evidence="4">Belongs to the arrestin family.</text>
</comment>
<feature type="chain" id="PRO_0000244347" description="Arrestin domain-containing protein 2">
    <location>
        <begin position="1"/>
        <end position="407"/>
    </location>
</feature>
<feature type="splice variant" id="VSP_019544" description="In isoform 2." evidence="3">
    <original>MLFDKVKAFSVQLDGATAGVEPVFSGGQAVAGRVLLELSSAARVGALRLRARGRAHVHWTESRSAGSSTAYTQSYSERVEVVSHRATLLAP</original>
    <variation>MRSGGVRSFALELARGPGGAYRGGERLCGRVLLEAAAPLRVRALEVKARGGAATHWLEGRSVGVNAVSSDYAAAETYLRRRQLLLR</variation>
    <location>
        <begin position="1"/>
        <end position="91"/>
    </location>
</feature>
<feature type="sequence variant" id="VAR_026895" description="In dbSNP:rs17852061." evidence="1">
    <original>R</original>
    <variation>H</variation>
    <location>
        <position position="181"/>
    </location>
</feature>
<feature type="sequence variant" id="VAR_026896" description="In dbSNP:rs17852062." evidence="1">
    <original>R</original>
    <variation>H</variation>
    <location>
        <position position="192"/>
    </location>
</feature>
<feature type="sequence variant" id="VAR_026897" description="In dbSNP:rs8110271.">
    <original>A</original>
    <variation>T</variation>
    <location>
        <position position="244"/>
    </location>
</feature>
<feature type="sequence variant" id="VAR_026898" description="In dbSNP:rs7259041." evidence="1">
    <original>L</original>
    <variation>P</variation>
    <location>
        <position position="396"/>
    </location>
</feature>
<accession>Q8TBH0</accession>
<accession>B2RBG9</accession>
<accession>O95895</accession>
<accession>Q6ZRV9</accession>
<accession>Q8WYG6</accession>
<proteinExistence type="evidence at protein level"/>
<gene>
    <name type="primary">ARRDC2</name>
    <name type="ORF">PP2703</name>
</gene>
<keyword id="KW-0025">Alternative splicing</keyword>
<keyword id="KW-1267">Proteomics identification</keyword>
<keyword id="KW-1185">Reference proteome</keyword>
<reference key="1">
    <citation type="journal article" date="2004" name="Nat. Genet.">
        <title>Complete sequencing and characterization of 21,243 full-length human cDNAs.</title>
        <authorList>
            <person name="Ota T."/>
            <person name="Suzuki Y."/>
            <person name="Nishikawa T."/>
            <person name="Otsuki T."/>
            <person name="Sugiyama T."/>
            <person name="Irie R."/>
            <person name="Wakamatsu A."/>
            <person name="Hayashi K."/>
            <person name="Sato H."/>
            <person name="Nagai K."/>
            <person name="Kimura K."/>
            <person name="Makita H."/>
            <person name="Sekine M."/>
            <person name="Obayashi M."/>
            <person name="Nishi T."/>
            <person name="Shibahara T."/>
            <person name="Tanaka T."/>
            <person name="Ishii S."/>
            <person name="Yamamoto J."/>
            <person name="Saito K."/>
            <person name="Kawai Y."/>
            <person name="Isono Y."/>
            <person name="Nakamura Y."/>
            <person name="Nagahari K."/>
            <person name="Murakami K."/>
            <person name="Yasuda T."/>
            <person name="Iwayanagi T."/>
            <person name="Wagatsuma M."/>
            <person name="Shiratori A."/>
            <person name="Sudo H."/>
            <person name="Hosoiri T."/>
            <person name="Kaku Y."/>
            <person name="Kodaira H."/>
            <person name="Kondo H."/>
            <person name="Sugawara M."/>
            <person name="Takahashi M."/>
            <person name="Kanda K."/>
            <person name="Yokoi T."/>
            <person name="Furuya T."/>
            <person name="Kikkawa E."/>
            <person name="Omura Y."/>
            <person name="Abe K."/>
            <person name="Kamihara K."/>
            <person name="Katsuta N."/>
            <person name="Sato K."/>
            <person name="Tanikawa M."/>
            <person name="Yamazaki M."/>
            <person name="Ninomiya K."/>
            <person name="Ishibashi T."/>
            <person name="Yamashita H."/>
            <person name="Murakawa K."/>
            <person name="Fujimori K."/>
            <person name="Tanai H."/>
            <person name="Kimata M."/>
            <person name="Watanabe M."/>
            <person name="Hiraoka S."/>
            <person name="Chiba Y."/>
            <person name="Ishida S."/>
            <person name="Ono Y."/>
            <person name="Takiguchi S."/>
            <person name="Watanabe S."/>
            <person name="Yosida M."/>
            <person name="Hotuta T."/>
            <person name="Kusano J."/>
            <person name="Kanehori K."/>
            <person name="Takahashi-Fujii A."/>
            <person name="Hara H."/>
            <person name="Tanase T.-O."/>
            <person name="Nomura Y."/>
            <person name="Togiya S."/>
            <person name="Komai F."/>
            <person name="Hara R."/>
            <person name="Takeuchi K."/>
            <person name="Arita M."/>
            <person name="Imose N."/>
            <person name="Musashino K."/>
            <person name="Yuuki H."/>
            <person name="Oshima A."/>
            <person name="Sasaki N."/>
            <person name="Aotsuka S."/>
            <person name="Yoshikawa Y."/>
            <person name="Matsunawa H."/>
            <person name="Ichihara T."/>
            <person name="Shiohata N."/>
            <person name="Sano S."/>
            <person name="Moriya S."/>
            <person name="Momiyama H."/>
            <person name="Satoh N."/>
            <person name="Takami S."/>
            <person name="Terashima Y."/>
            <person name="Suzuki O."/>
            <person name="Nakagawa S."/>
            <person name="Senoh A."/>
            <person name="Mizoguchi H."/>
            <person name="Goto Y."/>
            <person name="Shimizu F."/>
            <person name="Wakebe H."/>
            <person name="Hishigaki H."/>
            <person name="Watanabe T."/>
            <person name="Sugiyama A."/>
            <person name="Takemoto M."/>
            <person name="Kawakami B."/>
            <person name="Yamazaki M."/>
            <person name="Watanabe K."/>
            <person name="Kumagai A."/>
            <person name="Itakura S."/>
            <person name="Fukuzumi Y."/>
            <person name="Fujimori Y."/>
            <person name="Komiyama M."/>
            <person name="Tashiro H."/>
            <person name="Tanigami A."/>
            <person name="Fujiwara T."/>
            <person name="Ono T."/>
            <person name="Yamada K."/>
            <person name="Fujii Y."/>
            <person name="Ozaki K."/>
            <person name="Hirao M."/>
            <person name="Ohmori Y."/>
            <person name="Kawabata A."/>
            <person name="Hikiji T."/>
            <person name="Kobatake N."/>
            <person name="Inagaki H."/>
            <person name="Ikema Y."/>
            <person name="Okamoto S."/>
            <person name="Okitani R."/>
            <person name="Kawakami T."/>
            <person name="Noguchi S."/>
            <person name="Itoh T."/>
            <person name="Shigeta K."/>
            <person name="Senba T."/>
            <person name="Matsumura K."/>
            <person name="Nakajima Y."/>
            <person name="Mizuno T."/>
            <person name="Morinaga M."/>
            <person name="Sasaki M."/>
            <person name="Togashi T."/>
            <person name="Oyama M."/>
            <person name="Hata H."/>
            <person name="Watanabe M."/>
            <person name="Komatsu T."/>
            <person name="Mizushima-Sugano J."/>
            <person name="Satoh T."/>
            <person name="Shirai Y."/>
            <person name="Takahashi Y."/>
            <person name="Nakagawa K."/>
            <person name="Okumura K."/>
            <person name="Nagase T."/>
            <person name="Nomura N."/>
            <person name="Kikuchi H."/>
            <person name="Masuho Y."/>
            <person name="Yamashita R."/>
            <person name="Nakai K."/>
            <person name="Yada T."/>
            <person name="Nakamura Y."/>
            <person name="Ohara O."/>
            <person name="Isogai T."/>
            <person name="Sugano S."/>
        </authorList>
    </citation>
    <scope>NUCLEOTIDE SEQUENCE [LARGE SCALE MRNA] (ISOFORMS 1 AND 2)</scope>
    <source>
        <tissue>Synovial cell</tissue>
        <tissue>Tongue</tissue>
    </source>
</reference>
<reference key="2">
    <citation type="journal article" date="2004" name="Proc. Natl. Acad. Sci. U.S.A.">
        <title>Large-scale cDNA transfection screening for genes related to cancer development and progression.</title>
        <authorList>
            <person name="Wan D."/>
            <person name="Gong Y."/>
            <person name="Qin W."/>
            <person name="Zhang P."/>
            <person name="Li J."/>
            <person name="Wei L."/>
            <person name="Zhou X."/>
            <person name="Li H."/>
            <person name="Qiu X."/>
            <person name="Zhong F."/>
            <person name="He L."/>
            <person name="Yu J."/>
            <person name="Yao G."/>
            <person name="Jiang H."/>
            <person name="Qian L."/>
            <person name="Yu Y."/>
            <person name="Shu H."/>
            <person name="Chen X."/>
            <person name="Xu H."/>
            <person name="Guo M."/>
            <person name="Pan Z."/>
            <person name="Chen Y."/>
            <person name="Ge C."/>
            <person name="Yang S."/>
            <person name="Gu J."/>
        </authorList>
    </citation>
    <scope>NUCLEOTIDE SEQUENCE [LARGE SCALE MRNA] (ISOFORM 1)</scope>
</reference>
<reference key="3">
    <citation type="submission" date="2005-07" db="EMBL/GenBank/DDBJ databases">
        <authorList>
            <person name="Mural R.J."/>
            <person name="Istrail S."/>
            <person name="Sutton G.G."/>
            <person name="Florea L."/>
            <person name="Halpern A.L."/>
            <person name="Mobarry C.M."/>
            <person name="Lippert R."/>
            <person name="Walenz B."/>
            <person name="Shatkay H."/>
            <person name="Dew I."/>
            <person name="Miller J.R."/>
            <person name="Flanigan M.J."/>
            <person name="Edwards N.J."/>
            <person name="Bolanos R."/>
            <person name="Fasulo D."/>
            <person name="Halldorsson B.V."/>
            <person name="Hannenhalli S."/>
            <person name="Turner R."/>
            <person name="Yooseph S."/>
            <person name="Lu F."/>
            <person name="Nusskern D.R."/>
            <person name="Shue B.C."/>
            <person name="Zheng X.H."/>
            <person name="Zhong F."/>
            <person name="Delcher A.L."/>
            <person name="Huson D.H."/>
            <person name="Kravitz S.A."/>
            <person name="Mouchard L."/>
            <person name="Reinert K."/>
            <person name="Remington K.A."/>
            <person name="Clark A.G."/>
            <person name="Waterman M.S."/>
            <person name="Eichler E.E."/>
            <person name="Adams M.D."/>
            <person name="Hunkapiller M.W."/>
            <person name="Myers E.W."/>
            <person name="Venter J.C."/>
        </authorList>
    </citation>
    <scope>NUCLEOTIDE SEQUENCE [LARGE SCALE GENOMIC DNA]</scope>
</reference>
<reference key="4">
    <citation type="journal article" date="2004" name="Genome Res.">
        <title>The status, quality, and expansion of the NIH full-length cDNA project: the Mammalian Gene Collection (MGC).</title>
        <authorList>
            <consortium name="The MGC Project Team"/>
        </authorList>
    </citation>
    <scope>NUCLEOTIDE SEQUENCE [LARGE SCALE MRNA] (ISOFORM 1)</scope>
    <scope>VARIANTS HIS-181; HIS-192 AND PRO-396</scope>
    <source>
        <tissue>Brain</tissue>
    </source>
</reference>
<reference key="5">
    <citation type="submission" date="1999-02" db="EMBL/GenBank/DDBJ databases">
        <authorList>
            <person name="Mei G."/>
            <person name="Yu W."/>
            <person name="Gibbs R.A."/>
        </authorList>
    </citation>
    <scope>NUCLEOTIDE SEQUENCE [LARGE SCALE MRNA] OF 110-407</scope>
    <source>
        <tissue>Brain</tissue>
    </source>
</reference>
<reference key="6">
    <citation type="journal article" date="2011" name="J. Virol.">
        <title>Multiple interactions between the ESCRT machinery and arrestin-related proteins: implications for PPXY-dependent budding.</title>
        <authorList>
            <person name="Rauch S."/>
            <person name="Martin-Serrano J."/>
        </authorList>
    </citation>
    <scope>INTERACTION WITH WWP1</scope>
</reference>
<evidence type="ECO:0000269" key="1">
    <source>
    </source>
</evidence>
<evidence type="ECO:0000269" key="2">
    <source>
    </source>
</evidence>
<evidence type="ECO:0000303" key="3">
    <source>
    </source>
</evidence>
<evidence type="ECO:0000305" key="4"/>
<protein>
    <recommendedName>
        <fullName>Arrestin domain-containing protein 2</fullName>
    </recommendedName>
</protein>